<sequence>MTTIPSTAEAKLEMLTTINRAIAGSRPEALPPYPVPAPLSRAEILHQFEDRILDYGAAYTHVSAAELPGAIAKALGNARRVIVPAGIPAPWLTVGMDVLRDEPPLSHAELDRADAVLTGCAVAISETGTIILDHRADQGRRALSLIPDFHICVVREDQIVQTVREGVEAVAASVREGRPLTWLSGGSATSDIELVRVEGVHGPRRLQVIVVG</sequence>
<reference key="1">
    <citation type="journal article" date="1999" name="Science">
        <title>Genome sequence of the radioresistant bacterium Deinococcus radiodurans R1.</title>
        <authorList>
            <person name="White O."/>
            <person name="Eisen J.A."/>
            <person name="Heidelberg J.F."/>
            <person name="Hickey E.K."/>
            <person name="Peterson J.D."/>
            <person name="Dodson R.J."/>
            <person name="Haft D.H."/>
            <person name="Gwinn M.L."/>
            <person name="Nelson W.C."/>
            <person name="Richardson D.L."/>
            <person name="Moffat K.S."/>
            <person name="Qin H."/>
            <person name="Jiang L."/>
            <person name="Pamphile W."/>
            <person name="Crosby M."/>
            <person name="Shen M."/>
            <person name="Vamathevan J.J."/>
            <person name="Lam P."/>
            <person name="McDonald L.A."/>
            <person name="Utterback T.R."/>
            <person name="Zalewski C."/>
            <person name="Makarova K.S."/>
            <person name="Aravind L."/>
            <person name="Daly M.J."/>
            <person name="Minton K.W."/>
            <person name="Fleischmann R.D."/>
            <person name="Ketchum K.A."/>
            <person name="Nelson K.E."/>
            <person name="Salzberg S.L."/>
            <person name="Smith H.O."/>
            <person name="Venter J.C."/>
            <person name="Fraser C.M."/>
        </authorList>
    </citation>
    <scope>NUCLEOTIDE SEQUENCE [LARGE SCALE GENOMIC DNA]</scope>
    <source>
        <strain>ATCC 13939 / DSM 20539 / JCM 16871 / CCUG 27074 / LMG 4051 / NBRC 15346 / NCIMB 9279 / VKM B-1422 / R1</strain>
    </source>
</reference>
<reference key="2">
    <citation type="journal article" date="2013" name="BMC Bioinformatics">
        <title>LUD, a new protein domain associated with lactate utilization.</title>
        <authorList>
            <person name="Hwang W.C."/>
            <person name="Bakolitsa C."/>
            <person name="Punta M."/>
            <person name="Coggill P.C."/>
            <person name="Bateman A."/>
            <person name="Axelrod H.L."/>
            <person name="Rawlings N.D."/>
            <person name="Sedova M."/>
            <person name="Peterson S.N."/>
            <person name="Eberhardt R.Y."/>
            <person name="Aravind L."/>
            <person name="Pascual J."/>
            <person name="Godzik A."/>
        </authorList>
    </citation>
    <scope>X-RAY CRYSTALLOGRAPHY (1.70 ANGSTROMS)</scope>
    <scope>PROBABLE FUNCTION</scope>
    <scope>SUBUNIT</scope>
</reference>
<proteinExistence type="evidence at protein level"/>
<name>LUTC_DEIRA</name>
<keyword id="KW-0002">3D-structure</keyword>
<keyword id="KW-1185">Reference proteome</keyword>
<evidence type="ECO:0000305" key="1"/>
<evidence type="ECO:0000305" key="2">
    <source>
    </source>
</evidence>
<evidence type="ECO:0007829" key="3">
    <source>
        <dbReference type="PDB" id="2G40"/>
    </source>
</evidence>
<organism>
    <name type="scientific">Deinococcus radiodurans (strain ATCC 13939 / DSM 20539 / JCM 16871 / CCUG 27074 / LMG 4051 / NBRC 15346 / NCIMB 9279 / VKM B-1422 / R1)</name>
    <dbReference type="NCBI Taxonomy" id="243230"/>
    <lineage>
        <taxon>Bacteria</taxon>
        <taxon>Thermotogati</taxon>
        <taxon>Deinococcota</taxon>
        <taxon>Deinococci</taxon>
        <taxon>Deinococcales</taxon>
        <taxon>Deinococcaceae</taxon>
        <taxon>Deinococcus</taxon>
    </lineage>
</organism>
<dbReference type="EMBL" id="AE000513">
    <property type="protein sequence ID" value="AAF11463.1"/>
    <property type="molecule type" value="Genomic_DNA"/>
</dbReference>
<dbReference type="PIR" id="A75338">
    <property type="entry name" value="A75338"/>
</dbReference>
<dbReference type="RefSeq" id="NP_295632.1">
    <property type="nucleotide sequence ID" value="NC_001263.1"/>
</dbReference>
<dbReference type="RefSeq" id="WP_010888544.1">
    <property type="nucleotide sequence ID" value="NC_001263.1"/>
</dbReference>
<dbReference type="PDB" id="2G40">
    <property type="method" value="X-ray"/>
    <property type="resolution" value="1.70 A"/>
    <property type="chains" value="A=1-212"/>
</dbReference>
<dbReference type="PDBsum" id="2G40"/>
<dbReference type="SMR" id="Q9RT57"/>
<dbReference type="STRING" id="243230.DR_1909"/>
<dbReference type="PaxDb" id="243230-DR_1909"/>
<dbReference type="EnsemblBacteria" id="AAF11463">
    <property type="protein sequence ID" value="AAF11463"/>
    <property type="gene ID" value="DR_1909"/>
</dbReference>
<dbReference type="GeneID" id="69518149"/>
<dbReference type="KEGG" id="dra:DR_1909"/>
<dbReference type="PATRIC" id="fig|243230.17.peg.2125"/>
<dbReference type="eggNOG" id="COG1556">
    <property type="taxonomic scope" value="Bacteria"/>
</dbReference>
<dbReference type="HOGENOM" id="CLU_090664_0_0_0"/>
<dbReference type="InParanoid" id="Q9RT57"/>
<dbReference type="OrthoDB" id="9794157at2"/>
<dbReference type="EvolutionaryTrace" id="Q9RT57"/>
<dbReference type="Proteomes" id="UP000002524">
    <property type="component" value="Chromosome 1"/>
</dbReference>
<dbReference type="Gene3D" id="3.40.50.10420">
    <property type="entry name" value="NagB/RpiA/CoA transferase-like"/>
    <property type="match status" value="1"/>
</dbReference>
<dbReference type="InterPro" id="IPR024185">
    <property type="entry name" value="FTHF_cligase-like_sf"/>
</dbReference>
<dbReference type="InterPro" id="IPR003741">
    <property type="entry name" value="LUD_dom"/>
</dbReference>
<dbReference type="InterPro" id="IPR037171">
    <property type="entry name" value="NagB/RpiA_transferase-like"/>
</dbReference>
<dbReference type="PANTHER" id="PTHR43682">
    <property type="entry name" value="LACTATE UTILIZATION PROTEIN C"/>
    <property type="match status" value="1"/>
</dbReference>
<dbReference type="PANTHER" id="PTHR43682:SF1">
    <property type="entry name" value="LACTATE UTILIZATION PROTEIN C"/>
    <property type="match status" value="1"/>
</dbReference>
<dbReference type="Pfam" id="PF02589">
    <property type="entry name" value="LUD_dom"/>
    <property type="match status" value="1"/>
</dbReference>
<dbReference type="SUPFAM" id="SSF100950">
    <property type="entry name" value="NagB/RpiA/CoA transferase-like"/>
    <property type="match status" value="1"/>
</dbReference>
<accession>Q9RT57</accession>
<protein>
    <recommendedName>
        <fullName>Lactate utilization protein C</fullName>
    </recommendedName>
</protein>
<feature type="chain" id="PRO_0000429361" description="Lactate utilization protein C">
    <location>
        <begin position="1"/>
        <end position="212"/>
    </location>
</feature>
<feature type="helix" evidence="3">
    <location>
        <begin position="41"/>
        <end position="54"/>
    </location>
</feature>
<feature type="strand" evidence="3">
    <location>
        <begin position="58"/>
        <end position="62"/>
    </location>
</feature>
<feature type="turn" evidence="3">
    <location>
        <begin position="64"/>
        <end position="66"/>
    </location>
</feature>
<feature type="helix" evidence="3">
    <location>
        <begin position="67"/>
        <end position="75"/>
    </location>
</feature>
<feature type="strand" evidence="3">
    <location>
        <begin position="80"/>
        <end position="82"/>
    </location>
</feature>
<feature type="helix" evidence="3">
    <location>
        <begin position="89"/>
        <end position="91"/>
    </location>
</feature>
<feature type="strand" evidence="3">
    <location>
        <begin position="97"/>
        <end position="99"/>
    </location>
</feature>
<feature type="helix" evidence="3">
    <location>
        <begin position="107"/>
        <end position="112"/>
    </location>
</feature>
<feature type="strand" evidence="3">
    <location>
        <begin position="114"/>
        <end position="118"/>
    </location>
</feature>
<feature type="strand" evidence="3">
    <location>
        <begin position="121"/>
        <end position="124"/>
    </location>
</feature>
<feature type="turn" evidence="3">
    <location>
        <begin position="125"/>
        <end position="128"/>
    </location>
</feature>
<feature type="strand" evidence="3">
    <location>
        <begin position="129"/>
        <end position="132"/>
    </location>
</feature>
<feature type="turn" evidence="3">
    <location>
        <begin position="136"/>
        <end position="138"/>
    </location>
</feature>
<feature type="helix" evidence="3">
    <location>
        <begin position="141"/>
        <end position="144"/>
    </location>
</feature>
<feature type="strand" evidence="3">
    <location>
        <begin position="146"/>
        <end position="155"/>
    </location>
</feature>
<feature type="helix" evidence="3">
    <location>
        <begin position="156"/>
        <end position="158"/>
    </location>
</feature>
<feature type="strand" evidence="3">
    <location>
        <begin position="159"/>
        <end position="162"/>
    </location>
</feature>
<feature type="helix" evidence="3">
    <location>
        <begin position="163"/>
        <end position="175"/>
    </location>
</feature>
<feature type="strand" evidence="3">
    <location>
        <begin position="181"/>
        <end position="184"/>
    </location>
</feature>
<feature type="strand" evidence="3">
    <location>
        <begin position="204"/>
        <end position="211"/>
    </location>
</feature>
<comment type="function">
    <text>May function in L-lactate utilization.</text>
</comment>
<comment type="subunit">
    <text evidence="2">Homodimer.</text>
</comment>
<comment type="similarity">
    <text evidence="1">Belongs to the LutC/YkgG family.</text>
</comment>
<gene>
    <name type="primary">lutC</name>
    <name type="ordered locus">DR_1909</name>
</gene>